<evidence type="ECO:0000255" key="1"/>
<evidence type="ECO:0000255" key="2">
    <source>
        <dbReference type="PROSITE-ProRule" id="PRU01110"/>
    </source>
</evidence>
<evidence type="ECO:0000256" key="3">
    <source>
        <dbReference type="SAM" id="MobiDB-lite"/>
    </source>
</evidence>
<evidence type="ECO:0000269" key="4">
    <source>
    </source>
</evidence>
<evidence type="ECO:0000269" key="5">
    <source>
    </source>
</evidence>
<evidence type="ECO:0000303" key="6">
    <source>
    </source>
</evidence>
<evidence type="ECO:0000305" key="7">
    <source>
    </source>
</evidence>
<evidence type="ECO:0000312" key="8">
    <source>
        <dbReference type="EMBL" id="AAK40247.1"/>
    </source>
</evidence>
<keyword id="KW-0175">Coiled coil</keyword>
<keyword id="KW-0963">Cytoplasm</keyword>
<keyword id="KW-0597">Phosphoprotein</keyword>
<gene>
    <name evidence="6" type="primary">KIP1</name>
</gene>
<proteinExistence type="evidence at protein level"/>
<reference key="1">
    <citation type="journal article" date="2001" name="Plant Physiol.">
        <title>Isolation and characterization of kinase interacting protein 1, a pollen protein that interacts with the kinase domain of PRK1, a receptor-like kinase of petunia.</title>
        <authorList>
            <person name="Skirpan A.L."/>
            <person name="McCubbin A.G."/>
            <person name="Ishimizu T."/>
            <person name="Wang X."/>
            <person name="Hu Y."/>
            <person name="Dowd P.E."/>
            <person name="Ma H."/>
            <person name="Kao T."/>
        </authorList>
    </citation>
    <scope>NUCLEOTIDE SEQUENCE [MRNA]</scope>
    <scope>INTERACTION WITH PRK1</scope>
    <scope>TISSUE SPECIFICITY</scope>
    <scope>DEVELOPMENTAL STAGE</scope>
    <scope>PHOSPHORYLATION</scope>
    <scope>SUBCELLULAR LOCATION</scope>
    <scope>SUBUNIT</scope>
</reference>
<reference key="2">
    <citation type="journal article" date="2012" name="Curr. Biol.">
        <title>A superfamily of actin-binding proteins at the actin-membrane nexus of higher plants.</title>
        <authorList>
            <person name="Deeks M.J."/>
            <person name="Calcutt J.R."/>
            <person name="Ingle E.K."/>
            <person name="Hawkins T.J."/>
            <person name="Chapman S."/>
            <person name="Richardson A.C."/>
            <person name="Mentlak D.A."/>
            <person name="Dixon M.R."/>
            <person name="Cartwright F."/>
            <person name="Smertenko A.P."/>
            <person name="Oparka K."/>
            <person name="Hussey P.J."/>
        </authorList>
    </citation>
    <scope>DOMAIN</scope>
</reference>
<sequence length="974" mass="110425">MLQRAASNAYSWWAASHIRTKQSKWLEQSLHDMQGRVESVIKLIEEDGDSFAKRAEMYYKKRPELINFVEESYRAYRALAERYDHLSKELQTANNTIATIFPEQIQLAMDEEDEYGAPKMPKDFLQMPASGSNIPKVPPKAPIKDLKGLMSTASKQKQGKQSSKIEDAAKSGLSKNEAIEEIDKLQKDILALQTMKEFIRSSYQSSLEKFRGLENQIMEKQQKICELEDEFGEGRVIEDAEACTLMAEAALQSCQETVTQLQEKQESYTQEAREEFKKIEDACNKLNSFRHKYLGDQIDEAKVYISPIQEVDKEIESLQEKIKDQIDATSKGSLTMSQLAEKIDELVNKVVSLETAVSSQTLLLERFRAEADELQAQVQTLEDDKAALTDTHNLNIRVTAIEAKLQNIENLNKDVVNQNSCLRTHFVEARANIDHLSDKLSSVQPDEEIDGTDSSPDQVIALAEIKLEEESLKQKDHPSSAEGLKNLSTIKAEGPKNLSTIKTEGPKSLSTIKAEGPKNLSTIKAEGPKNLSTIKTEGPKSLSTIETEVPKNLSTIKTEDKEVRKQQGSSTVVSDKKTTMKHVTFAQPTPAEKGDEKVSAQSGNTSVYETHTQKSAEKDDELNWQQMLLSGLDDKENILLNEYTAILKNYKEVTKKLSDIEKKDRDTEFELTLQTRELKSAIAKRDEEIHNLRQKLSLMQQGNASENKALKEELLDPSDPSSARGLKPEDLPQIKDGDDEEDVKTILVDQRATVSPLEGKLRMSIDAILDENLDFWLRFSSAFHQIQKFKTTVHDLQNEISKARDKEMQGNSPRVDVKSEIRPLYKHMKEIQNELTVWLEQTLSLKDELERRFSALCSIQEEISKGLKEEVEDETTFSSHQAAKFQGEVLNMKHENKKVREELEAGISRVTILQEDVEKTVTQLDQEFGLTGNQSQLMQSVSKSRIPLQSFIFGTKPKKEKRSLFSRMNPNRKF</sequence>
<comment type="function">
    <text evidence="7">Probably involved in the receptor-like kinase-mediated signal transduction pathway.</text>
</comment>
<comment type="subunit">
    <text evidence="4">Homodimer or homooligomer. Interacts with PRK1.</text>
</comment>
<comment type="subcellular location">
    <subcellularLocation>
        <location evidence="4">Cytoplasm</location>
    </subcellularLocation>
</comment>
<comment type="tissue specificity">
    <text evidence="4">Expressed in mature pollen grains and pollen tubes, but not in style, ovary, petal, leaf, root or sepal.</text>
</comment>
<comment type="developmental stage">
    <text evidence="4">Detected around the time of microspore mitosis with a peak in mature pollen grains.</text>
</comment>
<comment type="domain">
    <text evidence="5">The NAB domain is capable to bind actin filaments.</text>
</comment>
<comment type="PTM">
    <text evidence="4">Phosphorylated by PRK1.</text>
</comment>
<organism evidence="8">
    <name type="scientific">Petunia integrifolia</name>
    <name type="common">Violet-flowered petunia</name>
    <name type="synonym">Salpiglossis integrifolia</name>
    <dbReference type="NCBI Taxonomy" id="4103"/>
    <lineage>
        <taxon>Eukaryota</taxon>
        <taxon>Viridiplantae</taxon>
        <taxon>Streptophyta</taxon>
        <taxon>Embryophyta</taxon>
        <taxon>Tracheophyta</taxon>
        <taxon>Spermatophyta</taxon>
        <taxon>Magnoliopsida</taxon>
        <taxon>eudicotyledons</taxon>
        <taxon>Gunneridae</taxon>
        <taxon>Pentapetalae</taxon>
        <taxon>asterids</taxon>
        <taxon>lamiids</taxon>
        <taxon>Solanales</taxon>
        <taxon>Solanaceae</taxon>
        <taxon>Petunioideae</taxon>
        <taxon>Petunia</taxon>
    </lineage>
</organism>
<dbReference type="EMBL" id="AY029758">
    <property type="protein sequence ID" value="AAK40247.1"/>
    <property type="molecule type" value="mRNA"/>
</dbReference>
<dbReference type="SMR" id="Q94CG5"/>
<dbReference type="GO" id="GO:0005737">
    <property type="term" value="C:cytoplasm"/>
    <property type="evidence" value="ECO:0007669"/>
    <property type="project" value="UniProtKB-SubCell"/>
</dbReference>
<dbReference type="GO" id="GO:0003779">
    <property type="term" value="F:actin binding"/>
    <property type="evidence" value="ECO:0007669"/>
    <property type="project" value="InterPro"/>
</dbReference>
<dbReference type="InterPro" id="IPR011684">
    <property type="entry name" value="NAB"/>
</dbReference>
<dbReference type="InterPro" id="IPR056889">
    <property type="entry name" value="NET2A-D/KIP1-like_C"/>
</dbReference>
<dbReference type="InterPro" id="IPR056888">
    <property type="entry name" value="NET2A-D/KIP1-like_dom"/>
</dbReference>
<dbReference type="PANTHER" id="PTHR31631:SF6">
    <property type="entry name" value="KINASE-INTERACTING PROTEIN 1-LIKE ISOFORM X1"/>
    <property type="match status" value="1"/>
</dbReference>
<dbReference type="PANTHER" id="PTHR31631">
    <property type="entry name" value="PROTEIN NETWORKED 2D"/>
    <property type="match status" value="1"/>
</dbReference>
<dbReference type="Pfam" id="PF07765">
    <property type="entry name" value="KIP1"/>
    <property type="match status" value="1"/>
</dbReference>
<dbReference type="Pfam" id="PF25014">
    <property type="entry name" value="NET2A"/>
    <property type="match status" value="1"/>
</dbReference>
<dbReference type="Pfam" id="PF24918">
    <property type="entry name" value="NET2A_C"/>
    <property type="match status" value="1"/>
</dbReference>
<dbReference type="PROSITE" id="PS51774">
    <property type="entry name" value="NAB"/>
    <property type="match status" value="1"/>
</dbReference>
<protein>
    <recommendedName>
        <fullName evidence="6">Kinase-interacting protein 1</fullName>
    </recommendedName>
</protein>
<feature type="chain" id="PRO_0000431905" description="Kinase-interacting protein 1">
    <location>
        <begin position="1"/>
        <end position="974"/>
    </location>
</feature>
<feature type="domain" description="NAB" evidence="2">
    <location>
        <begin position="10"/>
        <end position="90"/>
    </location>
</feature>
<feature type="region of interest" description="Disordered" evidence="3">
    <location>
        <begin position="151"/>
        <end position="170"/>
    </location>
</feature>
<feature type="region of interest" description="Disordered" evidence="3">
    <location>
        <begin position="586"/>
        <end position="614"/>
    </location>
</feature>
<feature type="region of interest" description="Disordered" evidence="3">
    <location>
        <begin position="714"/>
        <end position="740"/>
    </location>
</feature>
<feature type="coiled-coil region" evidence="1">
    <location>
        <begin position="173"/>
        <end position="423"/>
    </location>
</feature>
<feature type="coiled-coil region" evidence="1">
    <location>
        <begin position="641"/>
        <end position="697"/>
    </location>
</feature>
<feature type="coiled-coil region" evidence="1">
    <location>
        <begin position="784"/>
        <end position="807"/>
    </location>
</feature>
<feature type="coiled-coil region" evidence="1">
    <location>
        <begin position="882"/>
        <end position="905"/>
    </location>
</feature>
<feature type="compositionally biased region" description="Polar residues" evidence="3">
    <location>
        <begin position="599"/>
        <end position="610"/>
    </location>
</feature>
<feature type="compositionally biased region" description="Basic and acidic residues" evidence="3">
    <location>
        <begin position="726"/>
        <end position="736"/>
    </location>
</feature>
<accession>Q94CG5</accession>
<name>KIP1_PETIN</name>